<dbReference type="EC" id="2.1.1.-" evidence="1"/>
<dbReference type="EMBL" id="CM001232">
    <property type="protein sequence ID" value="EHA54329.1"/>
    <property type="molecule type" value="Genomic_DNA"/>
</dbReference>
<dbReference type="EMBL" id="CM001232">
    <property type="protein sequence ID" value="EHA54330.1"/>
    <property type="molecule type" value="Genomic_DNA"/>
</dbReference>
<dbReference type="RefSeq" id="XP_003714136.1">
    <property type="nucleotide sequence ID" value="XM_003714088.1"/>
</dbReference>
<dbReference type="RefSeq" id="XP_003714137.1">
    <property type="nucleotide sequence ID" value="XM_003714089.1"/>
</dbReference>
<dbReference type="STRING" id="242507.G4MXJ9"/>
<dbReference type="EnsemblFungi" id="MGG_01233T0">
    <property type="protein sequence ID" value="MGG_01233T0"/>
    <property type="gene ID" value="MGG_01233"/>
</dbReference>
<dbReference type="EnsemblFungi" id="MGG_01233T1">
    <property type="protein sequence ID" value="MGG_01233T1"/>
    <property type="gene ID" value="MGG_01233"/>
</dbReference>
<dbReference type="GeneID" id="2679435"/>
<dbReference type="KEGG" id="mgr:MGG_01233"/>
<dbReference type="VEuPathDB" id="FungiDB:MGG_01233"/>
<dbReference type="eggNOG" id="ENOG502QQMC">
    <property type="taxonomic scope" value="Eukaryota"/>
</dbReference>
<dbReference type="HOGENOM" id="CLU_010595_2_0_1"/>
<dbReference type="InParanoid" id="G4MXJ9"/>
<dbReference type="OMA" id="CDFYAPF"/>
<dbReference type="OrthoDB" id="2013972at2759"/>
<dbReference type="Proteomes" id="UP000009058">
    <property type="component" value="Chromosome 2"/>
</dbReference>
<dbReference type="GO" id="GO:0005634">
    <property type="term" value="C:nucleus"/>
    <property type="evidence" value="ECO:0007669"/>
    <property type="project" value="UniProtKB-SubCell"/>
</dbReference>
<dbReference type="GO" id="GO:0008168">
    <property type="term" value="F:methyltransferase activity"/>
    <property type="evidence" value="ECO:0007669"/>
    <property type="project" value="UniProtKB-KW"/>
</dbReference>
<dbReference type="GO" id="GO:0031640">
    <property type="term" value="P:killing of cells of another organism"/>
    <property type="evidence" value="ECO:0000305"/>
    <property type="project" value="UniProtKB"/>
</dbReference>
<dbReference type="GO" id="GO:0032259">
    <property type="term" value="P:methylation"/>
    <property type="evidence" value="ECO:0007669"/>
    <property type="project" value="UniProtKB-KW"/>
</dbReference>
<dbReference type="GO" id="GO:1900378">
    <property type="term" value="P:positive regulation of secondary metabolite biosynthetic process"/>
    <property type="evidence" value="ECO:0000315"/>
    <property type="project" value="UniProtKB"/>
</dbReference>
<dbReference type="Gene3D" id="3.40.50.150">
    <property type="entry name" value="Vaccinia Virus protein VP39"/>
    <property type="match status" value="1"/>
</dbReference>
<dbReference type="InterPro" id="IPR029063">
    <property type="entry name" value="SAM-dependent_MTases_sf"/>
</dbReference>
<dbReference type="PANTHER" id="PTHR43591">
    <property type="entry name" value="METHYLTRANSFERASE"/>
    <property type="match status" value="1"/>
</dbReference>
<dbReference type="PANTHER" id="PTHR43591:SF30">
    <property type="entry name" value="PROTEIN-METHIONINE METHYLTRANSFERASE LAEA"/>
    <property type="match status" value="1"/>
</dbReference>
<dbReference type="Pfam" id="PF13489">
    <property type="entry name" value="Methyltransf_23"/>
    <property type="match status" value="1"/>
</dbReference>
<dbReference type="SUPFAM" id="SSF53335">
    <property type="entry name" value="S-adenosyl-L-methionine-dependent methyltransferases"/>
    <property type="match status" value="1"/>
</dbReference>
<accession>G4MXJ9</accession>
<protein>
    <recommendedName>
        <fullName evidence="3">Secondary metabolism regulator LAE1</fullName>
    </recommendedName>
    <alternativeName>
        <fullName evidence="4">Methyltransferase LAE1</fullName>
        <ecNumber evidence="1">2.1.1.-</ecNumber>
    </alternativeName>
</protein>
<gene>
    <name evidence="3" type="primary">LAE1</name>
    <name type="ORF">MGG_01233</name>
</gene>
<keyword id="KW-0489">Methyltransferase</keyword>
<keyword id="KW-0539">Nucleus</keyword>
<keyword id="KW-1185">Reference proteome</keyword>
<keyword id="KW-0949">S-adenosyl-L-methionine</keyword>
<keyword id="KW-0804">Transcription</keyword>
<keyword id="KW-0805">Transcription regulation</keyword>
<keyword id="KW-0808">Transferase</keyword>
<keyword id="KW-0843">Virulence</keyword>
<feature type="chain" id="PRO_0000452835" description="Secondary metabolism regulator LAE1">
    <location>
        <begin position="1"/>
        <end position="327"/>
    </location>
</feature>
<organism>
    <name type="scientific">Pyricularia oryzae (strain 70-15 / ATCC MYA-4617 / FGSC 8958)</name>
    <name type="common">Rice blast fungus</name>
    <name type="synonym">Magnaporthe oryzae</name>
    <dbReference type="NCBI Taxonomy" id="242507"/>
    <lineage>
        <taxon>Eukaryota</taxon>
        <taxon>Fungi</taxon>
        <taxon>Dikarya</taxon>
        <taxon>Ascomycota</taxon>
        <taxon>Pezizomycotina</taxon>
        <taxon>Sordariomycetes</taxon>
        <taxon>Sordariomycetidae</taxon>
        <taxon>Magnaporthales</taxon>
        <taxon>Pyriculariaceae</taxon>
        <taxon>Pyricularia</taxon>
    </lineage>
</organism>
<name>LAEA_PYRO7</name>
<reference key="1">
    <citation type="journal article" date="2005" name="Nature">
        <title>The genome sequence of the rice blast fungus Magnaporthe grisea.</title>
        <authorList>
            <person name="Dean R.A."/>
            <person name="Talbot N.J."/>
            <person name="Ebbole D.J."/>
            <person name="Farman M.L."/>
            <person name="Mitchell T.K."/>
            <person name="Orbach M.J."/>
            <person name="Thon M.R."/>
            <person name="Kulkarni R."/>
            <person name="Xu J.-R."/>
            <person name="Pan H."/>
            <person name="Read N.D."/>
            <person name="Lee Y.-H."/>
            <person name="Carbone I."/>
            <person name="Brown D."/>
            <person name="Oh Y.Y."/>
            <person name="Donofrio N."/>
            <person name="Jeong J.S."/>
            <person name="Soanes D.M."/>
            <person name="Djonovic S."/>
            <person name="Kolomiets E."/>
            <person name="Rehmeyer C."/>
            <person name="Li W."/>
            <person name="Harding M."/>
            <person name="Kim S."/>
            <person name="Lebrun M.-H."/>
            <person name="Bohnert H."/>
            <person name="Coughlan S."/>
            <person name="Butler J."/>
            <person name="Calvo S.E."/>
            <person name="Ma L.-J."/>
            <person name="Nicol R."/>
            <person name="Purcell S."/>
            <person name="Nusbaum C."/>
            <person name="Galagan J.E."/>
            <person name="Birren B.W."/>
        </authorList>
    </citation>
    <scope>NUCLEOTIDE SEQUENCE [LARGE SCALE GENOMIC DNA]</scope>
    <source>
        <strain>70-15 / ATCC MYA-4617 / FGSC 8958</strain>
    </source>
</reference>
<reference key="2">
    <citation type="submission" date="2011-05" db="EMBL/GenBank/DDBJ databases">
        <title>The genome sequence of Magnaporthe oryzae 70-15.</title>
        <authorList>
            <person name="Ma L.-J."/>
            <person name="Dean R.A."/>
            <person name="Gowda M."/>
            <person name="Nunes C."/>
            <person name="Young S.K."/>
            <person name="Zeng Q."/>
            <person name="Gargeya S."/>
            <person name="Fitzgerald M."/>
            <person name="Haas B."/>
            <person name="Abouelleil A."/>
            <person name="Alvarado L."/>
            <person name="Arachchi H.M."/>
            <person name="Berlin A."/>
            <person name="Brown A."/>
            <person name="Chapman S.B."/>
            <person name="Chen Z."/>
            <person name="Dunbar C."/>
            <person name="Freedman E."/>
            <person name="Gearin G."/>
            <person name="Gellesch M."/>
            <person name="Goldberg J."/>
            <person name="Griggs A."/>
            <person name="Gujja S."/>
            <person name="Heiman D."/>
            <person name="Howarth C."/>
            <person name="Larson L."/>
            <person name="Lui A."/>
            <person name="MacDonald P.J.P."/>
            <person name="Mehta T."/>
            <person name="Montmayeur A."/>
            <person name="Murphy C."/>
            <person name="Neiman D."/>
            <person name="Pearson M."/>
            <person name="Priest M."/>
            <person name="Roberts A."/>
            <person name="Saif S."/>
            <person name="Shea T."/>
            <person name="Shenoy N."/>
            <person name="Sisk P."/>
            <person name="Stolte C."/>
            <person name="Sykes S."/>
            <person name="Yandava C."/>
            <person name="Wortman J."/>
            <person name="Nusbaum C."/>
            <person name="Birren B."/>
        </authorList>
    </citation>
    <scope>NUCLEOTIDE SEQUENCE [LARGE SCALE GENOMIC DNA]</scope>
    <source>
        <strain>70-15 / ATCC MYA-4617 / FGSC 8958</strain>
    </source>
</reference>
<reference key="3">
    <citation type="journal article" date="2017" name="ACS Chem. Biol.">
        <title>Regulatory mechanism of mycotoxin tenuazonic acid production in Pyricularia oryzae.</title>
        <authorList>
            <person name="Yun C.S."/>
            <person name="Motoyama T."/>
            <person name="Osada H."/>
        </authorList>
    </citation>
    <scope>FUNCTION</scope>
    <scope>DISRUPTION PHENOTYPE</scope>
</reference>
<comment type="function">
    <text evidence="1 2">Secondary metabolism regulator that controls the expression of the tenuazonic acid biosynthesis cluster (PubMed:28820236). Methyltransferase that performs automethylation (By similarity). No other methyl-accepting substrate has been identified yet (By similarity).</text>
</comment>
<comment type="catalytic activity">
    <reaction evidence="1">
        <text>L-methionyl-[protein] + S-adenosyl-L-methionine = S-methyl-L-methionyl-[protein] + S-adenosyl-L-homocysteine</text>
        <dbReference type="Rhea" id="RHEA:60560"/>
        <dbReference type="Rhea" id="RHEA-COMP:12313"/>
        <dbReference type="Rhea" id="RHEA-COMP:15592"/>
        <dbReference type="ChEBI" id="CHEBI:16044"/>
        <dbReference type="ChEBI" id="CHEBI:57856"/>
        <dbReference type="ChEBI" id="CHEBI:59789"/>
        <dbReference type="ChEBI" id="CHEBI:142742"/>
    </reaction>
    <physiologicalReaction direction="left-to-right" evidence="1">
        <dbReference type="Rhea" id="RHEA:60561"/>
    </physiologicalReaction>
</comment>
<comment type="subcellular location">
    <subcellularLocation>
        <location evidence="1">Nucleus</location>
    </subcellularLocation>
</comment>
<comment type="induction">
    <text evidence="2">Expression is induced by the presence of dimethylsulphoxide (DMSO) or by the deletion of OSM1, a HOG1-related mitogen-activated protein kinase.</text>
</comment>
<comment type="disruption phenotype">
    <text evidence="2">Impairs the ability to produce TeA under the DMSO-added, TeA-inducing culture conditions.</text>
</comment>
<comment type="similarity">
    <text evidence="4">Belongs to the methyltransferase superfamily. LaeA methyltransferase family.</text>
</comment>
<proteinExistence type="evidence at transcript level"/>
<evidence type="ECO:0000250" key="1">
    <source>
        <dbReference type="UniProtKB" id="C8VQG9"/>
    </source>
</evidence>
<evidence type="ECO:0000269" key="2">
    <source>
    </source>
</evidence>
<evidence type="ECO:0000303" key="3">
    <source>
    </source>
</evidence>
<evidence type="ECO:0000305" key="4"/>
<sequence length="327" mass="37660">MDKVLHATSLPILPGAIMSKNDAPEVEQLFKENGRLYQVWPRDRYLLPADQTEQDRLDIFSQLFKIILKEKLHTDASRVEENSHVLDLGCGTGLWVILMAHELHPKPSLFIGADVQMTQPDLIPATVRFTPADIEAPWTDEMVQHAPYDLINCRLMKGAIRSWPALYEKIAAHLKPETGVFEQFEIDWQFRCDDGPIPPALKQWSDEVMQAMDQHGMSIRCNREETRSMLLNHGFDDVQEQAIVLPISNWAEDERGREIGRWFNLALNHSTLPMSLAPLFRVMKKTPQYIDELNKAASREVCSQAHTDGVYCMLYIWTARTRPSRRR</sequence>